<feature type="chain" id="PRO_1000144981" description="Protein translocase subunit SecA">
    <location>
        <begin position="1"/>
        <end position="931"/>
    </location>
</feature>
<feature type="binding site" evidence="1">
    <location>
        <position position="87"/>
    </location>
    <ligand>
        <name>ATP</name>
        <dbReference type="ChEBI" id="CHEBI:30616"/>
    </ligand>
</feature>
<feature type="binding site" evidence="1">
    <location>
        <begin position="105"/>
        <end position="109"/>
    </location>
    <ligand>
        <name>ATP</name>
        <dbReference type="ChEBI" id="CHEBI:30616"/>
    </ligand>
</feature>
<feature type="binding site" evidence="1">
    <location>
        <position position="515"/>
    </location>
    <ligand>
        <name>ATP</name>
        <dbReference type="ChEBI" id="CHEBI:30616"/>
    </ligand>
</feature>
<feature type="binding site" evidence="1">
    <location>
        <position position="915"/>
    </location>
    <ligand>
        <name>Zn(2+)</name>
        <dbReference type="ChEBI" id="CHEBI:29105"/>
    </ligand>
</feature>
<feature type="binding site" evidence="1">
    <location>
        <position position="917"/>
    </location>
    <ligand>
        <name>Zn(2+)</name>
        <dbReference type="ChEBI" id="CHEBI:29105"/>
    </ligand>
</feature>
<feature type="binding site" evidence="1">
    <location>
        <position position="926"/>
    </location>
    <ligand>
        <name>Zn(2+)</name>
        <dbReference type="ChEBI" id="CHEBI:29105"/>
    </ligand>
</feature>
<feature type="binding site" evidence="1">
    <location>
        <position position="927"/>
    </location>
    <ligand>
        <name>Zn(2+)</name>
        <dbReference type="ChEBI" id="CHEBI:29105"/>
    </ligand>
</feature>
<comment type="function">
    <text evidence="1">Part of the Sec protein translocase complex. Interacts with the SecYEG preprotein conducting channel. Has a central role in coupling the hydrolysis of ATP to the transfer of proteins into and across the cell membrane, serving both as a receptor for the preprotein-SecB complex and as an ATP-driven molecular motor driving the stepwise translocation of polypeptide chains across the membrane.</text>
</comment>
<comment type="catalytic activity">
    <reaction evidence="1">
        <text>ATP + H2O + cellular proteinSide 1 = ADP + phosphate + cellular proteinSide 2.</text>
        <dbReference type="EC" id="7.4.2.8"/>
    </reaction>
</comment>
<comment type="cofactor">
    <cofactor evidence="1">
        <name>Zn(2+)</name>
        <dbReference type="ChEBI" id="CHEBI:29105"/>
    </cofactor>
    <text evidence="1">May bind 1 zinc ion per subunit.</text>
</comment>
<comment type="subunit">
    <text evidence="1">Monomer and homodimer. Part of the essential Sec protein translocation apparatus which comprises SecA, SecYEG and auxiliary proteins SecDF-YajC and YidC.</text>
</comment>
<comment type="subcellular location">
    <subcellularLocation>
        <location evidence="1">Cell inner membrane</location>
        <topology evidence="1">Peripheral membrane protein</topology>
        <orientation evidence="1">Cytoplasmic side</orientation>
    </subcellularLocation>
    <subcellularLocation>
        <location evidence="1">Cytoplasm</location>
    </subcellularLocation>
    <text evidence="1">Distribution is 50-50.</text>
</comment>
<comment type="similarity">
    <text evidence="1">Belongs to the SecA family.</text>
</comment>
<keyword id="KW-0067">ATP-binding</keyword>
<keyword id="KW-0997">Cell inner membrane</keyword>
<keyword id="KW-1003">Cell membrane</keyword>
<keyword id="KW-0963">Cytoplasm</keyword>
<keyword id="KW-0472">Membrane</keyword>
<keyword id="KW-0479">Metal-binding</keyword>
<keyword id="KW-0547">Nucleotide-binding</keyword>
<keyword id="KW-0653">Protein transport</keyword>
<keyword id="KW-1278">Translocase</keyword>
<keyword id="KW-0811">Translocation</keyword>
<keyword id="KW-0813">Transport</keyword>
<keyword id="KW-0862">Zinc</keyword>
<dbReference type="EC" id="7.4.2.8" evidence="1"/>
<dbReference type="EMBL" id="CP001025">
    <property type="protein sequence ID" value="ACB62994.1"/>
    <property type="molecule type" value="Genomic_DNA"/>
</dbReference>
<dbReference type="RefSeq" id="WP_012363031.1">
    <property type="nucleotide sequence ID" value="NC_010551.1"/>
</dbReference>
<dbReference type="SMR" id="B1YST3"/>
<dbReference type="KEGG" id="bac:BamMC406_0497"/>
<dbReference type="HOGENOM" id="CLU_005314_3_0_4"/>
<dbReference type="OrthoDB" id="9805579at2"/>
<dbReference type="Proteomes" id="UP000001680">
    <property type="component" value="Chromosome 1"/>
</dbReference>
<dbReference type="GO" id="GO:0031522">
    <property type="term" value="C:cell envelope Sec protein transport complex"/>
    <property type="evidence" value="ECO:0007669"/>
    <property type="project" value="TreeGrafter"/>
</dbReference>
<dbReference type="GO" id="GO:0005829">
    <property type="term" value="C:cytosol"/>
    <property type="evidence" value="ECO:0007669"/>
    <property type="project" value="TreeGrafter"/>
</dbReference>
<dbReference type="GO" id="GO:0005886">
    <property type="term" value="C:plasma membrane"/>
    <property type="evidence" value="ECO:0007669"/>
    <property type="project" value="UniProtKB-SubCell"/>
</dbReference>
<dbReference type="GO" id="GO:0005524">
    <property type="term" value="F:ATP binding"/>
    <property type="evidence" value="ECO:0007669"/>
    <property type="project" value="UniProtKB-UniRule"/>
</dbReference>
<dbReference type="GO" id="GO:0046872">
    <property type="term" value="F:metal ion binding"/>
    <property type="evidence" value="ECO:0007669"/>
    <property type="project" value="UniProtKB-KW"/>
</dbReference>
<dbReference type="GO" id="GO:0008564">
    <property type="term" value="F:protein-exporting ATPase activity"/>
    <property type="evidence" value="ECO:0007669"/>
    <property type="project" value="UniProtKB-EC"/>
</dbReference>
<dbReference type="GO" id="GO:0065002">
    <property type="term" value="P:intracellular protein transmembrane transport"/>
    <property type="evidence" value="ECO:0007669"/>
    <property type="project" value="UniProtKB-UniRule"/>
</dbReference>
<dbReference type="GO" id="GO:0017038">
    <property type="term" value="P:protein import"/>
    <property type="evidence" value="ECO:0007669"/>
    <property type="project" value="InterPro"/>
</dbReference>
<dbReference type="GO" id="GO:0006605">
    <property type="term" value="P:protein targeting"/>
    <property type="evidence" value="ECO:0007669"/>
    <property type="project" value="UniProtKB-UniRule"/>
</dbReference>
<dbReference type="GO" id="GO:0043952">
    <property type="term" value="P:protein transport by the Sec complex"/>
    <property type="evidence" value="ECO:0007669"/>
    <property type="project" value="TreeGrafter"/>
</dbReference>
<dbReference type="CDD" id="cd17928">
    <property type="entry name" value="DEXDc_SecA"/>
    <property type="match status" value="1"/>
</dbReference>
<dbReference type="CDD" id="cd18803">
    <property type="entry name" value="SF2_C_secA"/>
    <property type="match status" value="1"/>
</dbReference>
<dbReference type="FunFam" id="3.40.50.300:FF:000081">
    <property type="entry name" value="Preprotein translocase subunit SecA"/>
    <property type="match status" value="1"/>
</dbReference>
<dbReference type="FunFam" id="3.40.50.300:FF:000113">
    <property type="entry name" value="Preprotein translocase subunit SecA"/>
    <property type="match status" value="1"/>
</dbReference>
<dbReference type="FunFam" id="3.90.1440.10:FF:000001">
    <property type="entry name" value="Preprotein translocase subunit SecA"/>
    <property type="match status" value="1"/>
</dbReference>
<dbReference type="FunFam" id="1.10.3060.10:FF:000003">
    <property type="entry name" value="Protein translocase subunit SecA"/>
    <property type="match status" value="1"/>
</dbReference>
<dbReference type="Gene3D" id="1.10.3060.10">
    <property type="entry name" value="Helical scaffold and wing domains of SecA"/>
    <property type="match status" value="1"/>
</dbReference>
<dbReference type="Gene3D" id="3.40.50.300">
    <property type="entry name" value="P-loop containing nucleotide triphosphate hydrolases"/>
    <property type="match status" value="2"/>
</dbReference>
<dbReference type="Gene3D" id="3.90.1440.10">
    <property type="entry name" value="SecA, preprotein cross-linking domain"/>
    <property type="match status" value="1"/>
</dbReference>
<dbReference type="HAMAP" id="MF_01382">
    <property type="entry name" value="SecA"/>
    <property type="match status" value="1"/>
</dbReference>
<dbReference type="InterPro" id="IPR014001">
    <property type="entry name" value="Helicase_ATP-bd"/>
</dbReference>
<dbReference type="InterPro" id="IPR001650">
    <property type="entry name" value="Helicase_C-like"/>
</dbReference>
<dbReference type="InterPro" id="IPR027417">
    <property type="entry name" value="P-loop_NTPase"/>
</dbReference>
<dbReference type="InterPro" id="IPR004027">
    <property type="entry name" value="SEC_C_motif"/>
</dbReference>
<dbReference type="InterPro" id="IPR000185">
    <property type="entry name" value="SecA"/>
</dbReference>
<dbReference type="InterPro" id="IPR020937">
    <property type="entry name" value="SecA_CS"/>
</dbReference>
<dbReference type="InterPro" id="IPR011115">
    <property type="entry name" value="SecA_DEAD"/>
</dbReference>
<dbReference type="InterPro" id="IPR014018">
    <property type="entry name" value="SecA_motor_DEAD"/>
</dbReference>
<dbReference type="InterPro" id="IPR011130">
    <property type="entry name" value="SecA_preprotein_X-link_dom"/>
</dbReference>
<dbReference type="InterPro" id="IPR044722">
    <property type="entry name" value="SecA_SF2_C"/>
</dbReference>
<dbReference type="InterPro" id="IPR011116">
    <property type="entry name" value="SecA_Wing/Scaffold"/>
</dbReference>
<dbReference type="InterPro" id="IPR036266">
    <property type="entry name" value="SecA_Wing/Scaffold_sf"/>
</dbReference>
<dbReference type="InterPro" id="IPR036670">
    <property type="entry name" value="SecA_X-link_sf"/>
</dbReference>
<dbReference type="NCBIfam" id="NF009538">
    <property type="entry name" value="PRK12904.1"/>
    <property type="match status" value="1"/>
</dbReference>
<dbReference type="NCBIfam" id="TIGR00963">
    <property type="entry name" value="secA"/>
    <property type="match status" value="1"/>
</dbReference>
<dbReference type="PANTHER" id="PTHR30612:SF0">
    <property type="entry name" value="CHLOROPLAST PROTEIN-TRANSPORTING ATPASE"/>
    <property type="match status" value="1"/>
</dbReference>
<dbReference type="PANTHER" id="PTHR30612">
    <property type="entry name" value="SECA INNER MEMBRANE COMPONENT OF SEC PROTEIN SECRETION SYSTEM"/>
    <property type="match status" value="1"/>
</dbReference>
<dbReference type="Pfam" id="PF21090">
    <property type="entry name" value="P-loop_SecA"/>
    <property type="match status" value="1"/>
</dbReference>
<dbReference type="Pfam" id="PF02810">
    <property type="entry name" value="SEC-C"/>
    <property type="match status" value="1"/>
</dbReference>
<dbReference type="Pfam" id="PF07517">
    <property type="entry name" value="SecA_DEAD"/>
    <property type="match status" value="1"/>
</dbReference>
<dbReference type="Pfam" id="PF01043">
    <property type="entry name" value="SecA_PP_bind"/>
    <property type="match status" value="1"/>
</dbReference>
<dbReference type="Pfam" id="PF07516">
    <property type="entry name" value="SecA_SW"/>
    <property type="match status" value="1"/>
</dbReference>
<dbReference type="PRINTS" id="PR00906">
    <property type="entry name" value="SECA"/>
</dbReference>
<dbReference type="SMART" id="SM00957">
    <property type="entry name" value="SecA_DEAD"/>
    <property type="match status" value="1"/>
</dbReference>
<dbReference type="SMART" id="SM00958">
    <property type="entry name" value="SecA_PP_bind"/>
    <property type="match status" value="1"/>
</dbReference>
<dbReference type="SUPFAM" id="SSF81886">
    <property type="entry name" value="Helical scaffold and wing domains of SecA"/>
    <property type="match status" value="1"/>
</dbReference>
<dbReference type="SUPFAM" id="SSF52540">
    <property type="entry name" value="P-loop containing nucleoside triphosphate hydrolases"/>
    <property type="match status" value="2"/>
</dbReference>
<dbReference type="SUPFAM" id="SSF81767">
    <property type="entry name" value="Pre-protein crosslinking domain of SecA"/>
    <property type="match status" value="1"/>
</dbReference>
<dbReference type="PROSITE" id="PS01312">
    <property type="entry name" value="SECA"/>
    <property type="match status" value="1"/>
</dbReference>
<dbReference type="PROSITE" id="PS51196">
    <property type="entry name" value="SECA_MOTOR_DEAD"/>
    <property type="match status" value="1"/>
</dbReference>
<proteinExistence type="inferred from homology"/>
<evidence type="ECO:0000255" key="1">
    <source>
        <dbReference type="HAMAP-Rule" id="MF_01382"/>
    </source>
</evidence>
<accession>B1YST3</accession>
<organism>
    <name type="scientific">Burkholderia ambifaria (strain MC40-6)</name>
    <dbReference type="NCBI Taxonomy" id="398577"/>
    <lineage>
        <taxon>Bacteria</taxon>
        <taxon>Pseudomonadati</taxon>
        <taxon>Pseudomonadota</taxon>
        <taxon>Betaproteobacteria</taxon>
        <taxon>Burkholderiales</taxon>
        <taxon>Burkholderiaceae</taxon>
        <taxon>Burkholderia</taxon>
        <taxon>Burkholderia cepacia complex</taxon>
    </lineage>
</organism>
<gene>
    <name evidence="1" type="primary">secA</name>
    <name type="ordered locus">BamMC406_0497</name>
</gene>
<protein>
    <recommendedName>
        <fullName evidence="1">Protein translocase subunit SecA</fullName>
        <ecNumber evidence="1">7.4.2.8</ecNumber>
    </recommendedName>
</protein>
<sequence length="931" mass="104869">MTTGFLQKIFGSRNQRLVKQYQKTVETINALETQIEQLTDDQLRGKTDEFRQRVAAGESLDKLLPEAFAVCREASRRVLKMRHFDVQLIGGMVLHYGKIAEMRTGEGKTLVATLPVYLNALAGRGVHVVTVNDYLAQRDAEWMARLYNFLGLSVGINLSGMEHEQKQQAYASDITYGTNNEFGFDYLRDNMVYETEARVQRALNFAVVDEVDSILIDEARTPLIISGQAEDHTELYVRMNALPPLLERQIGEEKADGTGVEKPGDYTLDEKSRQVFLTESGHEKAERLLAEWGLIGEGESLYAPQNITLMHHVYAALRAHTLFYKDQHYVVQNGEVVIVDEFTGRLMAGRRWSDGLHQAVEAKEHVKIQSENQTLASITFQNYFRMYAKLAGMTGTADTEAYEFNEIYGLETVVIPTNRPPKRIDKQDQIYKTAKERYDAVIRDIRECYERGQPVLVGTTSIENSELLSHLLKQAGLPHEVLNAKQHEREAAIVAEAGRPKRITIATNMAGRGTDIVLGGNAEKQAAFIEADEAIPADEKARRIKQLHDEWETLHEQVKAAGGLHIIGTERHESRRIDNQLRGRAGRQGDPGSSRFYLSLDDPLLRIFAGDRVRSIMDRLKMPEGEAIEAGIVTRSIESAQRKVEARNFDIRKQLLEYDDVSNDQRKVIYQQRNELLEAHDITETISAMRHGVITEVVRQFVPEGSIEEQWDVPELEEALRNDWQLDLAIQEMVNESSSITADEILDAVTTAADEQYEAKVAMVGRESFSAFERSVMLQTVDRLWREHLAALDHLRQGIHLRGYAQKNPKQEYKREAFELFAAMLDAIKQEVTRIVMNVQIQSPEQLEEAAEQIEERSGHLENVEYQHADYAESGAPVANVAAATAATATADMVGSAMTHGHGGELPKVGRNDPCPCGSGKKYKQCHGKLS</sequence>
<reference key="1">
    <citation type="submission" date="2008-04" db="EMBL/GenBank/DDBJ databases">
        <title>Complete sequence of chromosome 1 of Burkholderia ambifaria MC40-6.</title>
        <authorList>
            <person name="Copeland A."/>
            <person name="Lucas S."/>
            <person name="Lapidus A."/>
            <person name="Glavina del Rio T."/>
            <person name="Dalin E."/>
            <person name="Tice H."/>
            <person name="Pitluck S."/>
            <person name="Chain P."/>
            <person name="Malfatti S."/>
            <person name="Shin M."/>
            <person name="Vergez L."/>
            <person name="Lang D."/>
            <person name="Schmutz J."/>
            <person name="Larimer F."/>
            <person name="Land M."/>
            <person name="Hauser L."/>
            <person name="Kyrpides N."/>
            <person name="Lykidis A."/>
            <person name="Ramette A."/>
            <person name="Konstantinidis K."/>
            <person name="Tiedje J."/>
            <person name="Richardson P."/>
        </authorList>
    </citation>
    <scope>NUCLEOTIDE SEQUENCE [LARGE SCALE GENOMIC DNA]</scope>
    <source>
        <strain>MC40-6</strain>
    </source>
</reference>
<name>SECA_BURA4</name>